<organism>
    <name type="scientific">Saccharophagus degradans (strain 2-40 / ATCC 43961 / DSM 17024)</name>
    <dbReference type="NCBI Taxonomy" id="203122"/>
    <lineage>
        <taxon>Bacteria</taxon>
        <taxon>Pseudomonadati</taxon>
        <taxon>Pseudomonadota</taxon>
        <taxon>Gammaproteobacteria</taxon>
        <taxon>Cellvibrionales</taxon>
        <taxon>Cellvibrionaceae</taxon>
        <taxon>Saccharophagus</taxon>
    </lineage>
</organism>
<sequence>MAKPSGKSTTKKKVKKTVVDGIAHIHASFNNTIVTITDRQGNTLSWATAGGSGFRGSRKSTPFAAQVAAERAGQAAQDYGLKNLDVEVKGPGPGRESAVRALNNIGYKVNNITDVTPIPHNGCRPPKKRRV</sequence>
<name>RS11_SACD2</name>
<proteinExistence type="inferred from homology"/>
<protein>
    <recommendedName>
        <fullName evidence="1">Small ribosomal subunit protein uS11</fullName>
    </recommendedName>
    <alternativeName>
        <fullName evidence="2">30S ribosomal protein S11</fullName>
    </alternativeName>
</protein>
<dbReference type="EMBL" id="CP000282">
    <property type="protein sequence ID" value="ABD80244.1"/>
    <property type="molecule type" value="Genomic_DNA"/>
</dbReference>
<dbReference type="RefSeq" id="WP_011467464.1">
    <property type="nucleotide sequence ID" value="NC_007912.1"/>
</dbReference>
<dbReference type="SMR" id="Q21M35"/>
<dbReference type="STRING" id="203122.Sde_0982"/>
<dbReference type="GeneID" id="98612666"/>
<dbReference type="KEGG" id="sde:Sde_0982"/>
<dbReference type="eggNOG" id="COG0100">
    <property type="taxonomic scope" value="Bacteria"/>
</dbReference>
<dbReference type="HOGENOM" id="CLU_072439_5_0_6"/>
<dbReference type="OrthoDB" id="9806415at2"/>
<dbReference type="Proteomes" id="UP000001947">
    <property type="component" value="Chromosome"/>
</dbReference>
<dbReference type="GO" id="GO:1990904">
    <property type="term" value="C:ribonucleoprotein complex"/>
    <property type="evidence" value="ECO:0007669"/>
    <property type="project" value="UniProtKB-KW"/>
</dbReference>
<dbReference type="GO" id="GO:0005840">
    <property type="term" value="C:ribosome"/>
    <property type="evidence" value="ECO:0007669"/>
    <property type="project" value="UniProtKB-KW"/>
</dbReference>
<dbReference type="GO" id="GO:0019843">
    <property type="term" value="F:rRNA binding"/>
    <property type="evidence" value="ECO:0007669"/>
    <property type="project" value="UniProtKB-UniRule"/>
</dbReference>
<dbReference type="GO" id="GO:0003735">
    <property type="term" value="F:structural constituent of ribosome"/>
    <property type="evidence" value="ECO:0007669"/>
    <property type="project" value="InterPro"/>
</dbReference>
<dbReference type="GO" id="GO:0006412">
    <property type="term" value="P:translation"/>
    <property type="evidence" value="ECO:0007669"/>
    <property type="project" value="UniProtKB-UniRule"/>
</dbReference>
<dbReference type="FunFam" id="3.30.420.80:FF:000001">
    <property type="entry name" value="30S ribosomal protein S11"/>
    <property type="match status" value="1"/>
</dbReference>
<dbReference type="Gene3D" id="3.30.420.80">
    <property type="entry name" value="Ribosomal protein S11"/>
    <property type="match status" value="1"/>
</dbReference>
<dbReference type="HAMAP" id="MF_01310">
    <property type="entry name" value="Ribosomal_uS11"/>
    <property type="match status" value="1"/>
</dbReference>
<dbReference type="InterPro" id="IPR001971">
    <property type="entry name" value="Ribosomal_uS11"/>
</dbReference>
<dbReference type="InterPro" id="IPR019981">
    <property type="entry name" value="Ribosomal_uS11_bac-type"/>
</dbReference>
<dbReference type="InterPro" id="IPR036967">
    <property type="entry name" value="Ribosomal_uS11_sf"/>
</dbReference>
<dbReference type="NCBIfam" id="NF003698">
    <property type="entry name" value="PRK05309.1"/>
    <property type="match status" value="1"/>
</dbReference>
<dbReference type="NCBIfam" id="TIGR03632">
    <property type="entry name" value="uS11_bact"/>
    <property type="match status" value="1"/>
</dbReference>
<dbReference type="PANTHER" id="PTHR11759">
    <property type="entry name" value="40S RIBOSOMAL PROTEIN S14/30S RIBOSOMAL PROTEIN S11"/>
    <property type="match status" value="1"/>
</dbReference>
<dbReference type="Pfam" id="PF00411">
    <property type="entry name" value="Ribosomal_S11"/>
    <property type="match status" value="1"/>
</dbReference>
<dbReference type="PIRSF" id="PIRSF002131">
    <property type="entry name" value="Ribosomal_S11"/>
    <property type="match status" value="1"/>
</dbReference>
<dbReference type="SUPFAM" id="SSF53137">
    <property type="entry name" value="Translational machinery components"/>
    <property type="match status" value="1"/>
</dbReference>
<reference key="1">
    <citation type="journal article" date="2008" name="PLoS Genet.">
        <title>Complete genome sequence of the complex carbohydrate-degrading marine bacterium, Saccharophagus degradans strain 2-40 T.</title>
        <authorList>
            <person name="Weiner R.M."/>
            <person name="Taylor L.E. II"/>
            <person name="Henrissat B."/>
            <person name="Hauser L."/>
            <person name="Land M."/>
            <person name="Coutinho P.M."/>
            <person name="Rancurel C."/>
            <person name="Saunders E.H."/>
            <person name="Longmire A.G."/>
            <person name="Zhang H."/>
            <person name="Bayer E.A."/>
            <person name="Gilbert H.J."/>
            <person name="Larimer F."/>
            <person name="Zhulin I.B."/>
            <person name="Ekborg N.A."/>
            <person name="Lamed R."/>
            <person name="Richardson P.M."/>
            <person name="Borovok I."/>
            <person name="Hutcheson S."/>
        </authorList>
    </citation>
    <scope>NUCLEOTIDE SEQUENCE [LARGE SCALE GENOMIC DNA]</scope>
    <source>
        <strain>2-40 / ATCC 43961 / DSM 17024</strain>
    </source>
</reference>
<keyword id="KW-1185">Reference proteome</keyword>
<keyword id="KW-0687">Ribonucleoprotein</keyword>
<keyword id="KW-0689">Ribosomal protein</keyword>
<keyword id="KW-0694">RNA-binding</keyword>
<keyword id="KW-0699">rRNA-binding</keyword>
<comment type="function">
    <text evidence="1">Located on the platform of the 30S subunit, it bridges several disparate RNA helices of the 16S rRNA. Forms part of the Shine-Dalgarno cleft in the 70S ribosome.</text>
</comment>
<comment type="subunit">
    <text evidence="1">Part of the 30S ribosomal subunit. Interacts with proteins S7 and S18. Binds to IF-3.</text>
</comment>
<comment type="similarity">
    <text evidence="1">Belongs to the universal ribosomal protein uS11 family.</text>
</comment>
<gene>
    <name evidence="1" type="primary">rpsK</name>
    <name type="ordered locus">Sde_0982</name>
</gene>
<evidence type="ECO:0000255" key="1">
    <source>
        <dbReference type="HAMAP-Rule" id="MF_01310"/>
    </source>
</evidence>
<evidence type="ECO:0000305" key="2"/>
<accession>Q21M35</accession>
<feature type="chain" id="PRO_0000294845" description="Small ribosomal subunit protein uS11">
    <location>
        <begin position="1"/>
        <end position="131"/>
    </location>
</feature>